<gene>
    <name evidence="1" type="primary">minC</name>
    <name type="ordered locus">E2348C_1295</name>
</gene>
<name>MINC_ECO27</name>
<feature type="chain" id="PRO_1000191245" description="Probable septum site-determining protein MinC">
    <location>
        <begin position="1"/>
        <end position="231"/>
    </location>
</feature>
<feature type="region of interest" description="Disordered" evidence="2">
    <location>
        <begin position="102"/>
        <end position="125"/>
    </location>
</feature>
<evidence type="ECO:0000255" key="1">
    <source>
        <dbReference type="HAMAP-Rule" id="MF_00267"/>
    </source>
</evidence>
<evidence type="ECO:0000256" key="2">
    <source>
        <dbReference type="SAM" id="MobiDB-lite"/>
    </source>
</evidence>
<reference key="1">
    <citation type="journal article" date="2009" name="J. Bacteriol.">
        <title>Complete genome sequence and comparative genome analysis of enteropathogenic Escherichia coli O127:H6 strain E2348/69.</title>
        <authorList>
            <person name="Iguchi A."/>
            <person name="Thomson N.R."/>
            <person name="Ogura Y."/>
            <person name="Saunders D."/>
            <person name="Ooka T."/>
            <person name="Henderson I.R."/>
            <person name="Harris D."/>
            <person name="Asadulghani M."/>
            <person name="Kurokawa K."/>
            <person name="Dean P."/>
            <person name="Kenny B."/>
            <person name="Quail M.A."/>
            <person name="Thurston S."/>
            <person name="Dougan G."/>
            <person name="Hayashi T."/>
            <person name="Parkhill J."/>
            <person name="Frankel G."/>
        </authorList>
    </citation>
    <scope>NUCLEOTIDE SEQUENCE [LARGE SCALE GENOMIC DNA]</scope>
    <source>
        <strain>E2348/69 / EPEC</strain>
    </source>
</reference>
<sequence>MSNTPIELKGSSFTLSVVHLHEAEPKVIHQALEDKIAQAPAFLKHAPVVLNVSALEDPVNWSAMHKAVSATGLRVIGVSGCKDAQLKAEIEKMGLPILTEGKEKAPRPAPAPQAPAQNTTPVTKTRLIDTPVRSGQRIYAPQCDLIVTSHVSAGAELIADGNIHVYGMMRGRALAGASGDRETQIFCTNLMAELVSIAGEYWLSDQIPAEFYGKAARLQLVENALTVQPLN</sequence>
<comment type="function">
    <text evidence="1">Cell division inhibitor that blocks the formation of polar Z ring septums. Rapidly oscillates between the poles of the cell to destabilize FtsZ filaments that have formed before they mature into polar Z rings. Prevents FtsZ polymerization.</text>
</comment>
<comment type="subunit">
    <text evidence="1">Interacts with MinD and FtsZ.</text>
</comment>
<comment type="similarity">
    <text evidence="1">Belongs to the MinC family.</text>
</comment>
<proteinExistence type="inferred from homology"/>
<keyword id="KW-0131">Cell cycle</keyword>
<keyword id="KW-0132">Cell division</keyword>
<keyword id="KW-1185">Reference proteome</keyword>
<keyword id="KW-0717">Septation</keyword>
<accession>B7UQ61</accession>
<protein>
    <recommendedName>
        <fullName evidence="1">Probable septum site-determining protein MinC</fullName>
    </recommendedName>
</protein>
<organism>
    <name type="scientific">Escherichia coli O127:H6 (strain E2348/69 / EPEC)</name>
    <dbReference type="NCBI Taxonomy" id="574521"/>
    <lineage>
        <taxon>Bacteria</taxon>
        <taxon>Pseudomonadati</taxon>
        <taxon>Pseudomonadota</taxon>
        <taxon>Gammaproteobacteria</taxon>
        <taxon>Enterobacterales</taxon>
        <taxon>Enterobacteriaceae</taxon>
        <taxon>Escherichia</taxon>
    </lineage>
</organism>
<dbReference type="EMBL" id="FM180568">
    <property type="protein sequence ID" value="CAS08843.1"/>
    <property type="molecule type" value="Genomic_DNA"/>
</dbReference>
<dbReference type="RefSeq" id="WP_000072536.1">
    <property type="nucleotide sequence ID" value="NC_011601.1"/>
</dbReference>
<dbReference type="SMR" id="B7UQ61"/>
<dbReference type="GeneID" id="93776258"/>
<dbReference type="KEGG" id="ecg:E2348C_1295"/>
<dbReference type="HOGENOM" id="CLU_067812_0_1_6"/>
<dbReference type="Proteomes" id="UP000008205">
    <property type="component" value="Chromosome"/>
</dbReference>
<dbReference type="GO" id="GO:0000902">
    <property type="term" value="P:cell morphogenesis"/>
    <property type="evidence" value="ECO:0007669"/>
    <property type="project" value="InterPro"/>
</dbReference>
<dbReference type="GO" id="GO:0000917">
    <property type="term" value="P:division septum assembly"/>
    <property type="evidence" value="ECO:0007669"/>
    <property type="project" value="UniProtKB-KW"/>
</dbReference>
<dbReference type="GO" id="GO:0051302">
    <property type="term" value="P:regulation of cell division"/>
    <property type="evidence" value="ECO:0007669"/>
    <property type="project" value="InterPro"/>
</dbReference>
<dbReference type="GO" id="GO:1901891">
    <property type="term" value="P:regulation of cell septum assembly"/>
    <property type="evidence" value="ECO:0007669"/>
    <property type="project" value="InterPro"/>
</dbReference>
<dbReference type="FunFam" id="2.160.20.70:FF:000002">
    <property type="entry name" value="Probable septum site-determining protein MinC"/>
    <property type="match status" value="1"/>
</dbReference>
<dbReference type="Gene3D" id="2.160.20.70">
    <property type="match status" value="1"/>
</dbReference>
<dbReference type="Gene3D" id="3.30.70.260">
    <property type="match status" value="1"/>
</dbReference>
<dbReference type="HAMAP" id="MF_00267">
    <property type="entry name" value="MinC"/>
    <property type="match status" value="1"/>
</dbReference>
<dbReference type="InterPro" id="IPR016098">
    <property type="entry name" value="CAP/MinC_C"/>
</dbReference>
<dbReference type="InterPro" id="IPR013033">
    <property type="entry name" value="MinC"/>
</dbReference>
<dbReference type="InterPro" id="IPR036145">
    <property type="entry name" value="MinC_C_sf"/>
</dbReference>
<dbReference type="InterPro" id="IPR007874">
    <property type="entry name" value="MinC_N"/>
</dbReference>
<dbReference type="InterPro" id="IPR005526">
    <property type="entry name" value="Septum_form_inhib_MinC_C"/>
</dbReference>
<dbReference type="NCBIfam" id="TIGR01222">
    <property type="entry name" value="minC"/>
    <property type="match status" value="1"/>
</dbReference>
<dbReference type="PANTHER" id="PTHR34108">
    <property type="entry name" value="SEPTUM SITE-DETERMINING PROTEIN MINC"/>
    <property type="match status" value="1"/>
</dbReference>
<dbReference type="PANTHER" id="PTHR34108:SF1">
    <property type="entry name" value="SEPTUM SITE-DETERMINING PROTEIN MINC"/>
    <property type="match status" value="1"/>
</dbReference>
<dbReference type="Pfam" id="PF03775">
    <property type="entry name" value="MinC_C"/>
    <property type="match status" value="1"/>
</dbReference>
<dbReference type="Pfam" id="PF05209">
    <property type="entry name" value="MinC_N"/>
    <property type="match status" value="1"/>
</dbReference>
<dbReference type="SUPFAM" id="SSF63848">
    <property type="entry name" value="Cell-division inhibitor MinC, C-terminal domain"/>
    <property type="match status" value="1"/>
</dbReference>